<comment type="function">
    <text evidence="1">Catalyzes the dephosphorylation of undecaprenyl diphosphate (UPP). Confers resistance to bacitracin.</text>
</comment>
<comment type="catalytic activity">
    <reaction evidence="1">
        <text>di-trans,octa-cis-undecaprenyl diphosphate + H2O = di-trans,octa-cis-undecaprenyl phosphate + phosphate + H(+)</text>
        <dbReference type="Rhea" id="RHEA:28094"/>
        <dbReference type="ChEBI" id="CHEBI:15377"/>
        <dbReference type="ChEBI" id="CHEBI:15378"/>
        <dbReference type="ChEBI" id="CHEBI:43474"/>
        <dbReference type="ChEBI" id="CHEBI:58405"/>
        <dbReference type="ChEBI" id="CHEBI:60392"/>
        <dbReference type="EC" id="3.6.1.27"/>
    </reaction>
</comment>
<comment type="subcellular location">
    <subcellularLocation>
        <location evidence="1">Cell membrane</location>
        <topology evidence="1">Multi-pass membrane protein</topology>
    </subcellularLocation>
</comment>
<comment type="miscellaneous">
    <text>Bacitracin is thought to be involved in the inhibition of peptidoglycan synthesis by sequestering undecaprenyl diphosphate, thereby reducing the pool of lipid carrier available.</text>
</comment>
<comment type="similarity">
    <text evidence="1">Belongs to the UppP family.</text>
</comment>
<keyword id="KW-0046">Antibiotic resistance</keyword>
<keyword id="KW-1003">Cell membrane</keyword>
<keyword id="KW-0133">Cell shape</keyword>
<keyword id="KW-0961">Cell wall biogenesis/degradation</keyword>
<keyword id="KW-0378">Hydrolase</keyword>
<keyword id="KW-0472">Membrane</keyword>
<keyword id="KW-0573">Peptidoglycan synthesis</keyword>
<keyword id="KW-0812">Transmembrane</keyword>
<keyword id="KW-1133">Transmembrane helix</keyword>
<name>UPPP_GEOSW</name>
<evidence type="ECO:0000255" key="1">
    <source>
        <dbReference type="HAMAP-Rule" id="MF_01006"/>
    </source>
</evidence>
<gene>
    <name evidence="1" type="primary">uppP</name>
    <name type="ordered locus">GWCH70_0186</name>
</gene>
<proteinExistence type="inferred from homology"/>
<protein>
    <recommendedName>
        <fullName evidence="1">Undecaprenyl-diphosphatase</fullName>
        <ecNumber evidence="1">3.6.1.27</ecNumber>
    </recommendedName>
    <alternativeName>
        <fullName evidence="1">Bacitracin resistance protein</fullName>
    </alternativeName>
    <alternativeName>
        <fullName evidence="1">Undecaprenyl pyrophosphate phosphatase</fullName>
    </alternativeName>
</protein>
<organism>
    <name type="scientific">Geobacillus sp. (strain WCH70)</name>
    <dbReference type="NCBI Taxonomy" id="471223"/>
    <lineage>
        <taxon>Bacteria</taxon>
        <taxon>Bacillati</taxon>
        <taxon>Bacillota</taxon>
        <taxon>Bacilli</taxon>
        <taxon>Bacillales</taxon>
        <taxon>Anoxybacillaceae</taxon>
        <taxon>Geobacillus</taxon>
    </lineage>
</organism>
<reference key="1">
    <citation type="submission" date="2009-06" db="EMBL/GenBank/DDBJ databases">
        <title>Complete sequence of chromosome of Geopacillus sp. WCH70.</title>
        <authorList>
            <consortium name="US DOE Joint Genome Institute"/>
            <person name="Lucas S."/>
            <person name="Copeland A."/>
            <person name="Lapidus A."/>
            <person name="Glavina del Rio T."/>
            <person name="Dalin E."/>
            <person name="Tice H."/>
            <person name="Bruce D."/>
            <person name="Goodwin L."/>
            <person name="Pitluck S."/>
            <person name="Chertkov O."/>
            <person name="Brettin T."/>
            <person name="Detter J.C."/>
            <person name="Han C."/>
            <person name="Larimer F."/>
            <person name="Land M."/>
            <person name="Hauser L."/>
            <person name="Kyrpides N."/>
            <person name="Mikhailova N."/>
            <person name="Brumm P."/>
            <person name="Mead D.A."/>
            <person name="Richardson P."/>
        </authorList>
    </citation>
    <scope>NUCLEOTIDE SEQUENCE [LARGE SCALE GENOMIC DNA]</scope>
    <source>
        <strain>WCH70</strain>
    </source>
</reference>
<sequence>MDIVEIIKAIILGMVEGLTEFAPVSSTGHMIIVDDMWLKSQEFLGKYAANTFKVVIQLGSILAVVVVFKDRFIDLLGLRGRHRDGKPRLKLMQVIVGLIPAGVLGVLFEDYIDEHLFSTATVLIGLVLGALLMIAADVFAKKAPKAQTVDQITYKQALIVGLVQCLSLWPGFSRSGSTISGGVLVGMSHRAAADFTFIMAVPIMMGASVLSLLKNWQYFTIDALPFFTAGFISAFLFALISIRFFLKLINQIRLVPFAVYRIVLALVIYIVYF</sequence>
<feature type="chain" id="PRO_1000213152" description="Undecaprenyl-diphosphatase">
    <location>
        <begin position="1"/>
        <end position="273"/>
    </location>
</feature>
<feature type="transmembrane region" description="Helical" evidence="1">
    <location>
        <begin position="3"/>
        <end position="23"/>
    </location>
</feature>
<feature type="transmembrane region" description="Helical" evidence="1">
    <location>
        <begin position="48"/>
        <end position="68"/>
    </location>
</feature>
<feature type="transmembrane region" description="Helical" evidence="1">
    <location>
        <begin position="92"/>
        <end position="112"/>
    </location>
</feature>
<feature type="transmembrane region" description="Helical" evidence="1">
    <location>
        <begin position="116"/>
        <end position="136"/>
    </location>
</feature>
<feature type="transmembrane region" description="Helical" evidence="1">
    <location>
        <begin position="152"/>
        <end position="172"/>
    </location>
</feature>
<feature type="transmembrane region" description="Helical" evidence="1">
    <location>
        <begin position="193"/>
        <end position="213"/>
    </location>
</feature>
<feature type="transmembrane region" description="Helical" evidence="1">
    <location>
        <begin position="220"/>
        <end position="240"/>
    </location>
</feature>
<feature type="transmembrane region" description="Helical" evidence="1">
    <location>
        <begin position="252"/>
        <end position="272"/>
    </location>
</feature>
<dbReference type="EC" id="3.6.1.27" evidence="1"/>
<dbReference type="EMBL" id="CP001638">
    <property type="protein sequence ID" value="ACS23118.1"/>
    <property type="molecule type" value="Genomic_DNA"/>
</dbReference>
<dbReference type="SMR" id="C5D3Y4"/>
<dbReference type="STRING" id="471223.GWCH70_0186"/>
<dbReference type="KEGG" id="gwc:GWCH70_0186"/>
<dbReference type="eggNOG" id="COG1968">
    <property type="taxonomic scope" value="Bacteria"/>
</dbReference>
<dbReference type="HOGENOM" id="CLU_060296_2_0_9"/>
<dbReference type="OrthoDB" id="9808289at2"/>
<dbReference type="GO" id="GO:0005886">
    <property type="term" value="C:plasma membrane"/>
    <property type="evidence" value="ECO:0007669"/>
    <property type="project" value="UniProtKB-SubCell"/>
</dbReference>
<dbReference type="GO" id="GO:0050380">
    <property type="term" value="F:undecaprenyl-diphosphatase activity"/>
    <property type="evidence" value="ECO:0007669"/>
    <property type="project" value="UniProtKB-UniRule"/>
</dbReference>
<dbReference type="GO" id="GO:0071555">
    <property type="term" value="P:cell wall organization"/>
    <property type="evidence" value="ECO:0007669"/>
    <property type="project" value="UniProtKB-KW"/>
</dbReference>
<dbReference type="GO" id="GO:0009252">
    <property type="term" value="P:peptidoglycan biosynthetic process"/>
    <property type="evidence" value="ECO:0007669"/>
    <property type="project" value="UniProtKB-KW"/>
</dbReference>
<dbReference type="GO" id="GO:0008360">
    <property type="term" value="P:regulation of cell shape"/>
    <property type="evidence" value="ECO:0007669"/>
    <property type="project" value="UniProtKB-KW"/>
</dbReference>
<dbReference type="GO" id="GO:0046677">
    <property type="term" value="P:response to antibiotic"/>
    <property type="evidence" value="ECO:0007669"/>
    <property type="project" value="UniProtKB-UniRule"/>
</dbReference>
<dbReference type="HAMAP" id="MF_01006">
    <property type="entry name" value="Undec_diphosphatase"/>
    <property type="match status" value="1"/>
</dbReference>
<dbReference type="InterPro" id="IPR003824">
    <property type="entry name" value="UppP"/>
</dbReference>
<dbReference type="NCBIfam" id="NF001389">
    <property type="entry name" value="PRK00281.1-2"/>
    <property type="match status" value="1"/>
</dbReference>
<dbReference type="NCBIfam" id="NF001390">
    <property type="entry name" value="PRK00281.1-4"/>
    <property type="match status" value="1"/>
</dbReference>
<dbReference type="NCBIfam" id="TIGR00753">
    <property type="entry name" value="undec_PP_bacA"/>
    <property type="match status" value="1"/>
</dbReference>
<dbReference type="PANTHER" id="PTHR30622">
    <property type="entry name" value="UNDECAPRENYL-DIPHOSPHATASE"/>
    <property type="match status" value="1"/>
</dbReference>
<dbReference type="PANTHER" id="PTHR30622:SF3">
    <property type="entry name" value="UNDECAPRENYL-DIPHOSPHATASE"/>
    <property type="match status" value="1"/>
</dbReference>
<dbReference type="Pfam" id="PF02673">
    <property type="entry name" value="BacA"/>
    <property type="match status" value="1"/>
</dbReference>
<accession>C5D3Y4</accession>